<reference key="1">
    <citation type="journal article" date="1992" name="Biochim. Biophys. Acta">
        <title>Human alpha 2-HS-glycoprotein/bovine fetuin homologue in mice: identification and developmental regulation of the gene.</title>
        <authorList>
            <person name="Yang F."/>
            <person name="Chen Z.-L."/>
            <person name="Bergeron J.M."/>
            <person name="Cupples R.L."/>
            <person name="Friedrichs W.E."/>
        </authorList>
    </citation>
    <scope>NUCLEOTIDE SEQUENCE</scope>
    <source>
        <tissue>Liver</tissue>
    </source>
</reference>
<reference key="2">
    <citation type="journal article" date="1997" name="J. Biol. Chem.">
        <title>Cloning and targeted deletion of the mouse fetuin gene.</title>
        <authorList>
            <person name="Jahnen-Dechent W."/>
            <person name="Schinke T."/>
            <person name="Trindl A."/>
            <person name="Mueller-Esterl W."/>
            <person name="Sablitzky F."/>
            <person name="Kaiser S."/>
            <person name="Blessing M."/>
        </authorList>
    </citation>
    <scope>NUCLEOTIDE SEQUENCE [GENOMIC DNA]</scope>
    <source>
        <strain>129</strain>
    </source>
</reference>
<reference key="3">
    <citation type="journal article" date="2004" name="Genome Res.">
        <title>The status, quality, and expansion of the NIH full-length cDNA project: the Mammalian Gene Collection (MGC).</title>
        <authorList>
            <consortium name="The MGC Project Team"/>
        </authorList>
    </citation>
    <scope>NUCLEOTIDE SEQUENCE [LARGE SCALE MRNA]</scope>
    <source>
        <strain>FVB/N</strain>
        <tissue>Liver</tissue>
        <tissue>Salivary gland</tissue>
    </source>
</reference>
<reference key="4">
    <citation type="journal article" date="1993" name="J. Biol. Chem.">
        <title>Isolation and characterization of mouse countertrypin, a new trypsin inhibitor belonging to the mammalian fetuin family.</title>
        <authorList>
            <person name="Yamamoto K."/>
            <person name="Sinohara H."/>
        </authorList>
    </citation>
    <scope>PARTIAL PROTEIN SEQUENCE</scope>
</reference>
<reference key="5">
    <citation type="journal article" date="2005" name="Infect. Immun.">
        <title>Fetuin-A, a hepatocyte-specific protein that binds Plasmodium berghei thrombospondin-related adhesive protein: a potential role in infectivity.</title>
        <authorList>
            <person name="Jethwaney D."/>
            <person name="Lepore T."/>
            <person name="Hassan S."/>
            <person name="Mello K."/>
            <person name="Rangarajan R."/>
            <person name="Jahnen-Dechent W."/>
            <person name="Wirth D."/>
            <person name="Sultan A.A."/>
        </authorList>
    </citation>
    <scope>FUNCTION (MICROBIAL INFECTION)</scope>
    <scope>DISRUPTION PHENOTYPE (MICROBIAL INFECTION)</scope>
</reference>
<reference key="6">
    <citation type="journal article" date="2006" name="J. Proteome Res.">
        <title>Proteome-wide characterization of N-glycosylation events by diagonal chromatography.</title>
        <authorList>
            <person name="Ghesquiere B."/>
            <person name="Van Damme J."/>
            <person name="Martens L."/>
            <person name="Vandekerckhove J."/>
            <person name="Gevaert K."/>
        </authorList>
    </citation>
    <scope>GLYCOSYLATION [LARGE SCALE ANALYSIS] AT ASN-176</scope>
    <source>
        <strain>C57BL/6J</strain>
        <tissue>Plasma</tissue>
    </source>
</reference>
<reference key="7">
    <citation type="journal article" date="2007" name="J. Proteome Res.">
        <title>Enhanced analysis of the mouse plasma proteome using cysteine-containing tryptic glycopeptides.</title>
        <authorList>
            <person name="Bernhard O.K."/>
            <person name="Kapp E.A."/>
            <person name="Simpson R.J."/>
        </authorList>
    </citation>
    <scope>GLYCOSYLATION [LARGE SCALE ANALYSIS] AT ASN-99; ASN-156 AND ASN-176</scope>
    <source>
        <strain>C57BL/6J</strain>
        <tissue>Plasma</tissue>
    </source>
</reference>
<reference key="8">
    <citation type="journal article" date="2007" name="Proc. Natl. Acad. Sci. U.S.A.">
        <title>Large-scale phosphorylation analysis of mouse liver.</title>
        <authorList>
            <person name="Villen J."/>
            <person name="Beausoleil S.A."/>
            <person name="Gerber S.A."/>
            <person name="Gygi S.P."/>
        </authorList>
    </citation>
    <scope>PHOSPHORYLATION [LARGE SCALE ANALYSIS] AT SER-138; SER-309; SER-312 AND SER-314</scope>
    <scope>IDENTIFICATION BY MASS SPECTROMETRY [LARGE SCALE ANALYSIS]</scope>
    <source>
        <tissue>Liver</tissue>
    </source>
</reference>
<reference key="9">
    <citation type="journal article" date="2008" name="J. Proteome Res.">
        <title>Specific phosphopeptide enrichment with immobilized titanium ion affinity chromatography adsorbent for phosphoproteome analysis.</title>
        <authorList>
            <person name="Zhou H."/>
            <person name="Ye M."/>
            <person name="Dong J."/>
            <person name="Han G."/>
            <person name="Jiang X."/>
            <person name="Wu R."/>
            <person name="Zou H."/>
        </authorList>
    </citation>
    <scope>PHOSPHORYLATION [LARGE SCALE ANALYSIS] AT SER-138; SER-309; SER-312 AND SER-314</scope>
    <scope>IDENTIFICATION BY MASS SPECTROMETRY [LARGE SCALE ANALYSIS]</scope>
    <source>
        <tissue>Liver</tissue>
    </source>
</reference>
<reference key="10">
    <citation type="journal article" date="2010" name="Cell">
        <title>A tissue-specific atlas of mouse protein phosphorylation and expression.</title>
        <authorList>
            <person name="Huttlin E.L."/>
            <person name="Jedrychowski M.P."/>
            <person name="Elias J.E."/>
            <person name="Goswami T."/>
            <person name="Rad R."/>
            <person name="Beausoleil S.A."/>
            <person name="Villen J."/>
            <person name="Haas W."/>
            <person name="Sowa M.E."/>
            <person name="Gygi S.P."/>
        </authorList>
    </citation>
    <scope>PHOSPHORYLATION [LARGE SCALE ANALYSIS] AT THR-135; SER-138; SER-309; SER-312 AND SER-314</scope>
    <scope>IDENTIFICATION BY MASS SPECTROMETRY [LARGE SCALE ANALYSIS]</scope>
    <source>
        <tissue>Brain</tissue>
        <tissue>Brown adipose tissue</tissue>
        <tissue>Heart</tissue>
        <tissue>Kidney</tissue>
        <tissue>Liver</tissue>
        <tissue>Lung</tissue>
        <tissue>Pancreas</tissue>
        <tissue>Spleen</tissue>
        <tissue>Testis</tissue>
    </source>
</reference>
<feature type="signal peptide" evidence="3">
    <location>
        <begin position="1"/>
        <end position="18"/>
    </location>
</feature>
<feature type="chain" id="PRO_0000008891" description="Alpha-2-HS-glycoprotein">
    <location>
        <begin position="19"/>
        <end position="345"/>
    </location>
</feature>
<feature type="domain" description="Cystatin fetuin-A-type 1" evidence="4">
    <location>
        <begin position="19"/>
        <end position="133"/>
    </location>
</feature>
<feature type="domain" description="Cystatin fetuin-A-type 2" evidence="4">
    <location>
        <begin position="144"/>
        <end position="250"/>
    </location>
</feature>
<feature type="region of interest" description="Disordered" evidence="5">
    <location>
        <begin position="312"/>
        <end position="334"/>
    </location>
</feature>
<feature type="modified residue" description="Phosphoserine" evidence="1">
    <location>
        <position position="134"/>
    </location>
</feature>
<feature type="modified residue" description="Phosphothreonine" evidence="12">
    <location>
        <position position="135"/>
    </location>
</feature>
<feature type="modified residue" description="Phosphoserine" evidence="10 11 12">
    <location>
        <position position="138"/>
    </location>
</feature>
<feature type="modified residue" description="Phosphoserine" evidence="2">
    <location>
        <position position="305"/>
    </location>
</feature>
<feature type="modified residue" description="Phosphoserine" evidence="10 11 12">
    <location>
        <position position="309"/>
    </location>
</feature>
<feature type="modified residue" description="Phosphoserine" evidence="10 11 12">
    <location>
        <position position="312"/>
    </location>
</feature>
<feature type="modified residue" description="Phosphoserine" evidence="10 11 12">
    <location>
        <position position="314"/>
    </location>
</feature>
<feature type="glycosylation site" description="N-linked (GlcNAc...) asparagine" evidence="8">
    <location>
        <position position="99"/>
    </location>
</feature>
<feature type="glycosylation site" description="N-linked (GlcNAc...) asparagine" evidence="8">
    <location>
        <position position="156"/>
    </location>
</feature>
<feature type="glycosylation site" description="N-linked (GlcNAc...) asparagine" evidence="7 8">
    <location>
        <position position="176"/>
    </location>
</feature>
<feature type="disulfide bond" evidence="4">
    <location>
        <begin position="32"/>
        <end position="336"/>
    </location>
</feature>
<feature type="disulfide bond" evidence="4">
    <location>
        <begin position="89"/>
        <end position="100"/>
    </location>
</feature>
<feature type="disulfide bond" evidence="4">
    <location>
        <begin position="114"/>
        <end position="132"/>
    </location>
</feature>
<feature type="disulfide bond" evidence="4">
    <location>
        <begin position="146"/>
        <end position="149"/>
    </location>
</feature>
<feature type="disulfide bond" evidence="4">
    <location>
        <begin position="208"/>
        <end position="219"/>
    </location>
</feature>
<feature type="disulfide bond" evidence="4">
    <location>
        <begin position="230"/>
        <end position="247"/>
    </location>
</feature>
<feature type="sequence conflict" description="In Ref. 2; CAA05210." evidence="9" ref="2">
    <original>R</original>
    <variation>RQ</variation>
    <location>
        <position position="71"/>
    </location>
</feature>
<comment type="function">
    <text>Probably involved in differentiation.</text>
</comment>
<comment type="function">
    <text evidence="6">(Microbial infection) Facilitates invasion of hepatocytes by Plasmodium berghei sporozoites.</text>
</comment>
<comment type="subcellular location">
    <subcellularLocation>
        <location>Secreted</location>
    </subcellularLocation>
</comment>
<comment type="tissue specificity">
    <text>Liver is the major site of synthesis, but fetuin is also expressed in limb buds and other extrahepatic tissues during development.</text>
</comment>
<comment type="PTM">
    <text evidence="1">Phosphorylated by FAM20C in the extracellular medium.</text>
</comment>
<comment type="disruption phenotype">
    <text evidence="6">(Microbial infection) Increased prepatent period of Plasmodium berghei infection (PubMed:16113307). Fewer Plasmodium berghei exoerythrocytic forms (PubMed:16113307).</text>
</comment>
<comment type="miscellaneous">
    <text evidence="6">Human AHSG interacts with Plasmodium berghei TRAP (via integrin-like A-domain); the interaction promotes sporozoite invasion of hepatocytes and formation of exoerythrocytic forms of parasites in human hepatoma HepG2 cells.</text>
</comment>
<comment type="similarity">
    <text evidence="4">Belongs to the fetuin family.</text>
</comment>
<keyword id="KW-0903">Direct protein sequencing</keyword>
<keyword id="KW-1015">Disulfide bond</keyword>
<keyword id="KW-0325">Glycoprotein</keyword>
<keyword id="KW-0597">Phosphoprotein</keyword>
<keyword id="KW-1185">Reference proteome</keyword>
<keyword id="KW-0677">Repeat</keyword>
<keyword id="KW-0964">Secreted</keyword>
<keyword id="KW-0732">Signal</keyword>
<gene>
    <name type="primary">Ahsg</name>
    <name type="synonym">Fetua</name>
</gene>
<name>FETUA_MOUSE</name>
<accession>P29699</accession>
<accession>O35634</accession>
<evidence type="ECO:0000250" key="1">
    <source>
        <dbReference type="UniProtKB" id="P02765"/>
    </source>
</evidence>
<evidence type="ECO:0000250" key="2">
    <source>
        <dbReference type="UniProtKB" id="P24090"/>
    </source>
</evidence>
<evidence type="ECO:0000255" key="3"/>
<evidence type="ECO:0000255" key="4">
    <source>
        <dbReference type="PROSITE-ProRule" id="PRU00861"/>
    </source>
</evidence>
<evidence type="ECO:0000256" key="5">
    <source>
        <dbReference type="SAM" id="MobiDB-lite"/>
    </source>
</evidence>
<evidence type="ECO:0000269" key="6">
    <source>
    </source>
</evidence>
<evidence type="ECO:0000269" key="7">
    <source>
    </source>
</evidence>
<evidence type="ECO:0000269" key="8">
    <source>
    </source>
</evidence>
<evidence type="ECO:0000305" key="9"/>
<evidence type="ECO:0007744" key="10">
    <source>
    </source>
</evidence>
<evidence type="ECO:0007744" key="11">
    <source>
    </source>
</evidence>
<evidence type="ECO:0007744" key="12">
    <source>
    </source>
</evidence>
<proteinExistence type="evidence at protein level"/>
<protein>
    <recommendedName>
        <fullName>Alpha-2-HS-glycoprotein</fullName>
    </recommendedName>
    <alternativeName>
        <fullName>Countertrypin</fullName>
    </alternativeName>
    <alternativeName>
        <fullName>Fetuin-A</fullName>
    </alternativeName>
</protein>
<organism>
    <name type="scientific">Mus musculus</name>
    <name type="common">Mouse</name>
    <dbReference type="NCBI Taxonomy" id="10090"/>
    <lineage>
        <taxon>Eukaryota</taxon>
        <taxon>Metazoa</taxon>
        <taxon>Chordata</taxon>
        <taxon>Craniata</taxon>
        <taxon>Vertebrata</taxon>
        <taxon>Euteleostomi</taxon>
        <taxon>Mammalia</taxon>
        <taxon>Eutheria</taxon>
        <taxon>Euarchontoglires</taxon>
        <taxon>Glires</taxon>
        <taxon>Rodentia</taxon>
        <taxon>Myomorpha</taxon>
        <taxon>Muroidea</taxon>
        <taxon>Muridae</taxon>
        <taxon>Murinae</taxon>
        <taxon>Mus</taxon>
        <taxon>Mus</taxon>
    </lineage>
</organism>
<sequence length="345" mass="37326">MKSLVLLLCFAQLWGCQSAPQGTGLGFRELACDDPEAEQVALLAVDYLNNHLLQGFKQVLNQIDKVKVWSRRPFGVVYEMEVDTLETTCHALDPTPLANCSVRQLTEHAVEGDCDFHILKQDGQFRVMHTQCHSTPDSAEDVRKLCPRCPLLTPFNDTNVVHTVNTALAAFNTQNNGTYFKLVEISRAQNVPLPVSTLVEFVIAATDCTAKEVTDPAKCNLLAEKQHGFCKANLMHNLGGEEVSVACKLFQTQPQPANANAVGPVPTANAALPADPPASVVVGPVVVPRGLSDHRTYHDLRHAFSPVASVESASGETLHSPKVGQPGAAGPVSPMCPGRIRHFKI</sequence>
<dbReference type="EMBL" id="S96534">
    <property type="protein sequence ID" value="AAB22070.1"/>
    <property type="molecule type" value="mRNA"/>
</dbReference>
<dbReference type="EMBL" id="AF007900">
    <property type="protein sequence ID" value="AAB81718.1"/>
    <property type="molecule type" value="Genomic_DNA"/>
</dbReference>
<dbReference type="EMBL" id="AJ002146">
    <property type="protein sequence ID" value="CAA05210.1"/>
    <property type="molecule type" value="Genomic_DNA"/>
</dbReference>
<dbReference type="EMBL" id="BC012678">
    <property type="protein sequence ID" value="AAH12678.1"/>
    <property type="molecule type" value="mRNA"/>
</dbReference>
<dbReference type="EMBL" id="BC019822">
    <property type="protein sequence ID" value="AAH19822.1"/>
    <property type="molecule type" value="mRNA"/>
</dbReference>
<dbReference type="CCDS" id="CCDS28071.1"/>
<dbReference type="PIR" id="S21094">
    <property type="entry name" value="S21094"/>
</dbReference>
<dbReference type="RefSeq" id="NP_038493.1">
    <property type="nucleotide sequence ID" value="NM_013465.3"/>
</dbReference>
<dbReference type="SMR" id="P29699"/>
<dbReference type="BioGRID" id="198039">
    <property type="interactions" value="10"/>
</dbReference>
<dbReference type="FunCoup" id="P29699">
    <property type="interactions" value="274"/>
</dbReference>
<dbReference type="IntAct" id="P29699">
    <property type="interactions" value="3"/>
</dbReference>
<dbReference type="STRING" id="10090.ENSMUSP00000023583"/>
<dbReference type="MEROPS" id="I25.020"/>
<dbReference type="MEROPS" id="I25.021"/>
<dbReference type="GlyConnect" id="729">
    <property type="glycosylation" value="1 N-Linked glycan (1 site)"/>
</dbReference>
<dbReference type="GlyCosmos" id="P29699">
    <property type="glycosylation" value="3 sites, 2 glycans"/>
</dbReference>
<dbReference type="GlyGen" id="P29699">
    <property type="glycosylation" value="4 sites, 2 N-linked glycans (1 site), 1 O-linked glycan (1 site)"/>
</dbReference>
<dbReference type="iPTMnet" id="P29699"/>
<dbReference type="PhosphoSitePlus" id="P29699"/>
<dbReference type="SwissPalm" id="P29699"/>
<dbReference type="REPRODUCTION-2DPAGE" id="IPI00128249"/>
<dbReference type="CPTAC" id="non-CPTAC-3578"/>
<dbReference type="jPOST" id="P29699"/>
<dbReference type="PaxDb" id="10090-ENSMUSP00000023583"/>
<dbReference type="PeptideAtlas" id="P29699"/>
<dbReference type="ProteomicsDB" id="271742"/>
<dbReference type="Antibodypedia" id="870">
    <property type="antibodies" value="664 antibodies from 40 providers"/>
</dbReference>
<dbReference type="DNASU" id="11625"/>
<dbReference type="Ensembl" id="ENSMUST00000023583.7">
    <property type="protein sequence ID" value="ENSMUSP00000023583.6"/>
    <property type="gene ID" value="ENSMUSG00000022868.7"/>
</dbReference>
<dbReference type="GeneID" id="11625"/>
<dbReference type="KEGG" id="mmu:11625"/>
<dbReference type="UCSC" id="uc007ysr.2">
    <property type="organism name" value="mouse"/>
</dbReference>
<dbReference type="AGR" id="MGI:107189"/>
<dbReference type="CTD" id="197"/>
<dbReference type="MGI" id="MGI:107189">
    <property type="gene designation" value="Ahsg"/>
</dbReference>
<dbReference type="VEuPathDB" id="HostDB:ENSMUSG00000022868"/>
<dbReference type="eggNOG" id="ENOG502RYRI">
    <property type="taxonomic scope" value="Eukaryota"/>
</dbReference>
<dbReference type="GeneTree" id="ENSGT00950000182930"/>
<dbReference type="HOGENOM" id="CLU_052519_0_0_1"/>
<dbReference type="InParanoid" id="P29699"/>
<dbReference type="OMA" id="KVWPRQP"/>
<dbReference type="OrthoDB" id="8780871at2759"/>
<dbReference type="PhylomeDB" id="P29699"/>
<dbReference type="TreeFam" id="TF333729"/>
<dbReference type="Reactome" id="R-MMU-114608">
    <property type="pathway name" value="Platelet degranulation"/>
</dbReference>
<dbReference type="Reactome" id="R-MMU-381426">
    <property type="pathway name" value="Regulation of Insulin-like Growth Factor (IGF) transport and uptake by Insulin-like Growth Factor Binding Proteins (IGFBPs)"/>
</dbReference>
<dbReference type="Reactome" id="R-MMU-6798695">
    <property type="pathway name" value="Neutrophil degranulation"/>
</dbReference>
<dbReference type="Reactome" id="R-MMU-8957275">
    <property type="pathway name" value="Post-translational protein phosphorylation"/>
</dbReference>
<dbReference type="BioGRID-ORCS" id="11625">
    <property type="hits" value="1 hit in 80 CRISPR screens"/>
</dbReference>
<dbReference type="ChiTaRS" id="Ahsg">
    <property type="organism name" value="mouse"/>
</dbReference>
<dbReference type="PRO" id="PR:P29699"/>
<dbReference type="Proteomes" id="UP000000589">
    <property type="component" value="Chromosome 16"/>
</dbReference>
<dbReference type="RNAct" id="P29699">
    <property type="molecule type" value="protein"/>
</dbReference>
<dbReference type="Bgee" id="ENSMUSG00000022868">
    <property type="expression patterns" value="Expressed in left lobe of liver and 69 other cell types or tissues"/>
</dbReference>
<dbReference type="ExpressionAtlas" id="P29699">
    <property type="expression patterns" value="baseline and differential"/>
</dbReference>
<dbReference type="GO" id="GO:0005615">
    <property type="term" value="C:extracellular space"/>
    <property type="evidence" value="ECO:0007669"/>
    <property type="project" value="InterPro"/>
</dbReference>
<dbReference type="GO" id="GO:0005794">
    <property type="term" value="C:Golgi apparatus"/>
    <property type="evidence" value="ECO:0007669"/>
    <property type="project" value="Ensembl"/>
</dbReference>
<dbReference type="GO" id="GO:0004869">
    <property type="term" value="F:cysteine-type endopeptidase inhibitor activity"/>
    <property type="evidence" value="ECO:0007669"/>
    <property type="project" value="InterPro"/>
</dbReference>
<dbReference type="GO" id="GO:0006953">
    <property type="term" value="P:acute-phase response"/>
    <property type="evidence" value="ECO:0000250"/>
    <property type="project" value="UniProtKB"/>
</dbReference>
<dbReference type="GO" id="GO:0030502">
    <property type="term" value="P:negative regulation of bone mineralization"/>
    <property type="evidence" value="ECO:0000314"/>
    <property type="project" value="UniProtKB"/>
</dbReference>
<dbReference type="GO" id="GO:0001503">
    <property type="term" value="P:ossification"/>
    <property type="evidence" value="ECO:0000314"/>
    <property type="project" value="MGI"/>
</dbReference>
<dbReference type="GO" id="GO:0050766">
    <property type="term" value="P:positive regulation of phagocytosis"/>
    <property type="evidence" value="ECO:0000250"/>
    <property type="project" value="UniProtKB"/>
</dbReference>
<dbReference type="GO" id="GO:0050727">
    <property type="term" value="P:regulation of inflammatory response"/>
    <property type="evidence" value="ECO:0000250"/>
    <property type="project" value="UniProtKB"/>
</dbReference>
<dbReference type="CDD" id="cd00042">
    <property type="entry name" value="CY"/>
    <property type="match status" value="2"/>
</dbReference>
<dbReference type="FunFam" id="3.10.450.10:FF:000010">
    <property type="entry name" value="Alpha-2-HS-glycoprotein"/>
    <property type="match status" value="1"/>
</dbReference>
<dbReference type="FunFam" id="3.10.450.10:FF:000009">
    <property type="entry name" value="Alpha-2-HS-glycoprotein 2"/>
    <property type="match status" value="1"/>
</dbReference>
<dbReference type="Gene3D" id="3.10.450.10">
    <property type="match status" value="2"/>
</dbReference>
<dbReference type="InterPro" id="IPR000010">
    <property type="entry name" value="Cystatin_dom"/>
</dbReference>
<dbReference type="InterPro" id="IPR025760">
    <property type="entry name" value="Cystatin_Fetuin_A"/>
</dbReference>
<dbReference type="InterPro" id="IPR046350">
    <property type="entry name" value="Cystatin_sf"/>
</dbReference>
<dbReference type="InterPro" id="IPR050735">
    <property type="entry name" value="Kininogen_Fetuin_HRG"/>
</dbReference>
<dbReference type="InterPro" id="IPR001363">
    <property type="entry name" value="Prot_inh_fetuin_CS"/>
</dbReference>
<dbReference type="PANTHER" id="PTHR13814:SF6">
    <property type="entry name" value="ALPHA-2-HS-GLYCOPROTEIN"/>
    <property type="match status" value="1"/>
</dbReference>
<dbReference type="PANTHER" id="PTHR13814">
    <property type="entry name" value="FETUIN"/>
    <property type="match status" value="1"/>
</dbReference>
<dbReference type="Pfam" id="PF00031">
    <property type="entry name" value="Cystatin"/>
    <property type="match status" value="1"/>
</dbReference>
<dbReference type="SMART" id="SM00043">
    <property type="entry name" value="CY"/>
    <property type="match status" value="2"/>
</dbReference>
<dbReference type="SUPFAM" id="SSF54403">
    <property type="entry name" value="Cystatin/monellin"/>
    <property type="match status" value="2"/>
</dbReference>
<dbReference type="PROSITE" id="PS51529">
    <property type="entry name" value="CYSTATIN_FETUIN_A"/>
    <property type="match status" value="2"/>
</dbReference>
<dbReference type="PROSITE" id="PS01254">
    <property type="entry name" value="FETUIN_1"/>
    <property type="match status" value="1"/>
</dbReference>
<dbReference type="PROSITE" id="PS01255">
    <property type="entry name" value="FETUIN_2"/>
    <property type="match status" value="1"/>
</dbReference>